<sequence>MSTSTPQSGGRRKPETPDSAFLSPATRPQPISAAATPTLLNFTSNDDERERKLRRMSRVIDLQLSNANSPATAISPAQSRGADTPTSLLPKLNNTQISDHYSTCIKLSQENKITTKNAFGLHLIDYMGDILKHKDSELTNFKVAAGTLDASAKIYAVRVDAVHADVYKVLGGLGKESQATEDTENQETDTGPQDGRKNPKRRKCSYKTIERNLNSINRSETERKSEIDPLFQKAAASFDEFSTAGVFLSTLKCHSYHSELHFDADVKPLSTAEETEPPSPGSMDSTELKSLFLQCVEKRPLCPSLSGFRFMQWNSDAQNENLSLLMDKFKKSDHVFDINAEVEDDFVESEAPVADEFDADVCEGMDAGDIGEFAEHREACRLERKGAQLTQIGNGDIGTMCLQLSSCPGEYSYFSPRTMSMWAGPEHWRFRPRQKASTDSDQQRVKKAKKVFELNFEDDIDFEVHFRKTRAATTLTKSTLESQNKKSTTLPADFHYDPDNIARMSLRPKDRIRKTTVQESVSEPEDDIGDYDYNNPNDTSNFCPALQAADSDDDDGAFLGPESNSAGFSAENQMNITSYGESNLVAGQKVNKIEIQYAKTAKKMDMKRLKSSMWSLLANCPESQEEMPSSKEEIDAALITDEQVFSSVTHGLQKRLPPVMAQNLSVPLAFACLLHLANEKNLKLQGMDDLSDVMIMQDD</sequence>
<evidence type="ECO:0000250" key="1"/>
<evidence type="ECO:0000256" key="2">
    <source>
        <dbReference type="SAM" id="MobiDB-lite"/>
    </source>
</evidence>
<evidence type="ECO:0000269" key="3">
    <source>
    </source>
</evidence>
<evidence type="ECO:0000269" key="4">
    <source>
    </source>
</evidence>
<evidence type="ECO:0000269" key="5">
    <source>
    </source>
</evidence>
<evidence type="ECO:0000305" key="6"/>
<organism>
    <name type="scientific">Xenopus laevis</name>
    <name type="common">African clawed frog</name>
    <dbReference type="NCBI Taxonomy" id="8355"/>
    <lineage>
        <taxon>Eukaryota</taxon>
        <taxon>Metazoa</taxon>
        <taxon>Chordata</taxon>
        <taxon>Craniata</taxon>
        <taxon>Vertebrata</taxon>
        <taxon>Euteleostomi</taxon>
        <taxon>Amphibia</taxon>
        <taxon>Batrachia</taxon>
        <taxon>Anura</taxon>
        <taxon>Pipoidea</taxon>
        <taxon>Pipidae</taxon>
        <taxon>Xenopodinae</taxon>
        <taxon>Xenopus</taxon>
        <taxon>Xenopus</taxon>
    </lineage>
</organism>
<reference key="1">
    <citation type="journal article" date="1997" name="Cell">
        <title>Condensins, chromosome condensation protein complexes containing XCAP-C, XCAP-E and a Xenopus homolog of the Drosophila Barren protein.</title>
        <authorList>
            <person name="Hirano T."/>
            <person name="Kobayashi R."/>
            <person name="Hirano M."/>
        </authorList>
    </citation>
    <scope>NUCLEOTIDE SEQUENCE [MRNA]</scope>
    <scope>PROTEIN SEQUENCE OF 117-132; 135-153; 233-250 AND 632-652</scope>
    <scope>IDENTIFICATION IN A CONDENSIN COMPLEX WITH XCAP-C; XCAP-E; XCAP-D2 AND XCAP-G</scope>
</reference>
<reference key="2">
    <citation type="journal article" date="1998" name="Science">
        <title>Phosphorylation and activation of 13S condensin by Cdc2 in vitro.</title>
        <authorList>
            <person name="Kimura K."/>
            <person name="Hirano M."/>
            <person name="Kobayashi R."/>
            <person name="Hirano T."/>
        </authorList>
    </citation>
    <scope>FUNCTION OF THE CONDENSIN COMPLEX</scope>
    <scope>PHOSPHORYLATION BY CDK1</scope>
</reference>
<reference key="3">
    <citation type="journal article" date="1999" name="Cell">
        <title>13S condensin actively reconfigures DNA by introducing global positive writhe: implications for chromosome condensation.</title>
        <authorList>
            <person name="Kimura K."/>
            <person name="Rybenkov V.V."/>
            <person name="Crisona N.J."/>
            <person name="Hirano T."/>
            <person name="Cozzarelli N.R."/>
        </authorList>
    </citation>
    <scope>FUNCTION OF THE CONDENSIN COMPLEX</scope>
</reference>
<dbReference type="EMBL" id="U90125">
    <property type="protein sequence ID" value="AAC60203.1"/>
    <property type="molecule type" value="mRNA"/>
</dbReference>
<dbReference type="RefSeq" id="NP_001081818.1">
    <property type="nucleotide sequence ID" value="NM_001088349.1"/>
</dbReference>
<dbReference type="BioGRID" id="99404">
    <property type="interactions" value="2"/>
</dbReference>
<dbReference type="DNASU" id="398069"/>
<dbReference type="GeneID" id="398069"/>
<dbReference type="KEGG" id="xla:398069"/>
<dbReference type="AGR" id="Xenbase:XB-GENE-5738491"/>
<dbReference type="CTD" id="398069"/>
<dbReference type="Xenbase" id="XB-GENE-5738491">
    <property type="gene designation" value="ncaph.S"/>
</dbReference>
<dbReference type="OrthoDB" id="362021at2759"/>
<dbReference type="Proteomes" id="UP000186698">
    <property type="component" value="Chromosome 3S"/>
</dbReference>
<dbReference type="GO" id="GO:0000796">
    <property type="term" value="C:condensin complex"/>
    <property type="evidence" value="ECO:0000318"/>
    <property type="project" value="GO_Central"/>
</dbReference>
<dbReference type="GO" id="GO:0005829">
    <property type="term" value="C:cytosol"/>
    <property type="evidence" value="ECO:0000304"/>
    <property type="project" value="Reactome"/>
</dbReference>
<dbReference type="GO" id="GO:0005634">
    <property type="term" value="C:nucleus"/>
    <property type="evidence" value="ECO:0007669"/>
    <property type="project" value="UniProtKB-SubCell"/>
</dbReference>
<dbReference type="GO" id="GO:0003682">
    <property type="term" value="F:chromatin binding"/>
    <property type="evidence" value="ECO:0000318"/>
    <property type="project" value="GO_Central"/>
</dbReference>
<dbReference type="GO" id="GO:0051301">
    <property type="term" value="P:cell division"/>
    <property type="evidence" value="ECO:0007669"/>
    <property type="project" value="UniProtKB-KW"/>
</dbReference>
<dbReference type="GO" id="GO:0007076">
    <property type="term" value="P:mitotic chromosome condensation"/>
    <property type="evidence" value="ECO:0000318"/>
    <property type="project" value="GO_Central"/>
</dbReference>
<dbReference type="InterPro" id="IPR022816">
    <property type="entry name" value="Condensin_barren_su2"/>
</dbReference>
<dbReference type="PANTHER" id="PTHR13108">
    <property type="entry name" value="CONDENSIN COMPLEX SUBUNIT 2"/>
    <property type="match status" value="1"/>
</dbReference>
<dbReference type="PANTHER" id="PTHR13108:SF9">
    <property type="entry name" value="CONDENSIN COMPLEX SUBUNIT 2"/>
    <property type="match status" value="1"/>
</dbReference>
<dbReference type="Pfam" id="PF05786">
    <property type="entry name" value="Cnd2"/>
    <property type="match status" value="1"/>
</dbReference>
<dbReference type="PIRSF" id="PIRSF017126">
    <property type="entry name" value="Condensin_H"/>
    <property type="match status" value="1"/>
</dbReference>
<gene>
    <name type="primary">ncaph</name>
    <name type="synonym">brrn1</name>
    <name type="synonym">caph</name>
</gene>
<feature type="chain" id="PRO_0000095040" description="Condensin complex subunit 2">
    <location>
        <begin position="1"/>
        <end position="699"/>
    </location>
</feature>
<feature type="region of interest" description="Disordered" evidence="2">
    <location>
        <begin position="1"/>
        <end position="35"/>
    </location>
</feature>
<feature type="region of interest" description="Disordered" evidence="2">
    <location>
        <begin position="176"/>
        <end position="203"/>
    </location>
</feature>
<feature type="sequence conflict" description="In Ref. 1; AA sequence." evidence="6" ref="1">
    <original>K</original>
    <variation>T</variation>
    <location>
        <position position="233"/>
    </location>
</feature>
<name>CND2_XENLA</name>
<proteinExistence type="evidence at protein level"/>
<protein>
    <recommendedName>
        <fullName>Condensin complex subunit 2</fullName>
    </recommendedName>
    <alternativeName>
        <fullName>Barren homolog</fullName>
    </alternativeName>
    <alternativeName>
        <fullName>Chromosome assembly protein xCAP-H</fullName>
    </alternativeName>
    <alternativeName>
        <fullName>Chromosome-associated protein H</fullName>
    </alternativeName>
    <alternativeName>
        <fullName>Non-SMC condensin I complex subunit H</fullName>
    </alternativeName>
</protein>
<accession>O13067</accession>
<comment type="function">
    <text evidence="3 5">Regulatory subunit of the condensin complex, a complex required for conversion of interphase chromatin into mitotic-like condense chromosomes. The condensin complex probably introduces positive supercoils into relaxed DNA in the presence of type I topoisomerases and converts nicked DNA into positive knotted forms in the presence of type II topoisomerase.</text>
</comment>
<comment type="subunit">
    <text evidence="4">Component of the condensin complex, which contains the XCAP-E/SMC2 and XCAP-C/SMC4 heterodimer, and three non SMC subunits that probably regulate the complex: XCAP-H/NCAPH, XCAP-D2/NCAPD2 and XCAP-G/NCAPG.</text>
</comment>
<comment type="subcellular location">
    <subcellularLocation>
        <location evidence="1">Nucleus</location>
    </subcellularLocation>
    <subcellularLocation>
        <location evidence="1">Cytoplasm</location>
    </subcellularLocation>
    <subcellularLocation>
        <location evidence="1">Chromosome</location>
    </subcellularLocation>
    <text evidence="1">In interphase cells, the majority of the condensin complex is found in the cytoplasm, while a minority of the complex is associated with chromatin. A subpopulation of the complex however remains associated with chromosome foci in interphase cells. During mitosis, most of the condensin complex is associated with the chromatin. At the onset of prophase, the regulatory subunits of the complex are phosphorylated by CDK1, leading to condensin's association with chromosome arms and to chromosome condensation. Dissociation from chromosomes is observed in late telophase (By similarity).</text>
</comment>
<comment type="PTM">
    <text evidence="5">Phosphorylated by CDK1. Its phosphorylation, as well as that of XCAP-D2 and XCAP-G subunits, activates the condensin complex and is required for chromosome condensation.</text>
</comment>
<comment type="similarity">
    <text evidence="6">Belongs to the CND2 (condensin subunit 2) family.</text>
</comment>
<keyword id="KW-0131">Cell cycle</keyword>
<keyword id="KW-0132">Cell division</keyword>
<keyword id="KW-0158">Chromosome</keyword>
<keyword id="KW-0963">Cytoplasm</keyword>
<keyword id="KW-0903">Direct protein sequencing</keyword>
<keyword id="KW-0226">DNA condensation</keyword>
<keyword id="KW-0498">Mitosis</keyword>
<keyword id="KW-0539">Nucleus</keyword>
<keyword id="KW-0597">Phosphoprotein</keyword>
<keyword id="KW-1185">Reference proteome</keyword>